<evidence type="ECO:0000255" key="1">
    <source>
        <dbReference type="HAMAP-Rule" id="MF_04068"/>
    </source>
</evidence>
<gene>
    <name evidence="1" type="primary">M</name>
</gene>
<protein>
    <recommendedName>
        <fullName evidence="1">Matrix protein 1</fullName>
        <shortName evidence="1">M1</shortName>
    </recommendedName>
</protein>
<proteinExistence type="inferred from homology"/>
<dbReference type="EMBL" id="M63520">
    <property type="protein sequence ID" value="AAA43338.1"/>
    <property type="molecule type" value="Genomic_RNA"/>
</dbReference>
<dbReference type="SMR" id="Q67204"/>
<dbReference type="GO" id="GO:0042025">
    <property type="term" value="C:host cell nucleus"/>
    <property type="evidence" value="ECO:0007669"/>
    <property type="project" value="UniProtKB-SubCell"/>
</dbReference>
<dbReference type="GO" id="GO:0016020">
    <property type="term" value="C:membrane"/>
    <property type="evidence" value="ECO:0007669"/>
    <property type="project" value="UniProtKB-KW"/>
</dbReference>
<dbReference type="GO" id="GO:0055036">
    <property type="term" value="C:virion membrane"/>
    <property type="evidence" value="ECO:0007669"/>
    <property type="project" value="UniProtKB-SubCell"/>
</dbReference>
<dbReference type="GO" id="GO:0003723">
    <property type="term" value="F:RNA binding"/>
    <property type="evidence" value="ECO:0007669"/>
    <property type="project" value="UniProtKB-UniRule"/>
</dbReference>
<dbReference type="GO" id="GO:0039660">
    <property type="term" value="F:structural constituent of virion"/>
    <property type="evidence" value="ECO:0007669"/>
    <property type="project" value="UniProtKB-UniRule"/>
</dbReference>
<dbReference type="GO" id="GO:0046761">
    <property type="term" value="P:viral budding from plasma membrane"/>
    <property type="evidence" value="ECO:0007669"/>
    <property type="project" value="UniProtKB-UniRule"/>
</dbReference>
<dbReference type="FunFam" id="1.10.10.180:FF:000001">
    <property type="entry name" value="Matrix protein 1"/>
    <property type="match status" value="1"/>
</dbReference>
<dbReference type="FunFam" id="1.20.91.10:FF:000001">
    <property type="entry name" value="Matrix protein 1"/>
    <property type="match status" value="1"/>
</dbReference>
<dbReference type="Gene3D" id="1.10.10.180">
    <property type="match status" value="1"/>
</dbReference>
<dbReference type="Gene3D" id="1.20.91.10">
    <property type="match status" value="1"/>
</dbReference>
<dbReference type="HAMAP" id="MF_04068">
    <property type="entry name" value="INFV_M1"/>
    <property type="match status" value="1"/>
</dbReference>
<dbReference type="InterPro" id="IPR036039">
    <property type="entry name" value="Flu_matrix_M1"/>
</dbReference>
<dbReference type="InterPro" id="IPR013188">
    <property type="entry name" value="Flu_matrix_M1_C"/>
</dbReference>
<dbReference type="InterPro" id="IPR001561">
    <property type="entry name" value="Flu_matrix_M1_N"/>
</dbReference>
<dbReference type="InterPro" id="IPR015423">
    <property type="entry name" value="Flu_matrix_M1_N_sub1"/>
</dbReference>
<dbReference type="InterPro" id="IPR015799">
    <property type="entry name" value="Flu_matrix_M1_N_sub2"/>
</dbReference>
<dbReference type="InterPro" id="IPR037533">
    <property type="entry name" value="INFV_M1"/>
</dbReference>
<dbReference type="Pfam" id="PF00598">
    <property type="entry name" value="Flu_M1"/>
    <property type="match status" value="1"/>
</dbReference>
<dbReference type="Pfam" id="PF08289">
    <property type="entry name" value="Flu_M1_C"/>
    <property type="match status" value="1"/>
</dbReference>
<dbReference type="SMART" id="SM00759">
    <property type="entry name" value="Flu_M1_C"/>
    <property type="match status" value="1"/>
</dbReference>
<dbReference type="SUPFAM" id="SSF48145">
    <property type="entry name" value="Influenza virus matrix protein M1"/>
    <property type="match status" value="1"/>
</dbReference>
<accession>Q67204</accession>
<organismHost>
    <name type="scientific">Aves</name>
    <dbReference type="NCBI Taxonomy" id="8782"/>
</organismHost>
<organismHost>
    <name type="scientific">Homo sapiens</name>
    <name type="common">Human</name>
    <dbReference type="NCBI Taxonomy" id="9606"/>
</organismHost>
<organismHost>
    <name type="scientific">Sus scrofa</name>
    <name type="common">Pig</name>
    <dbReference type="NCBI Taxonomy" id="9823"/>
</organismHost>
<comment type="function">
    <text evidence="1">Plays critical roles in virus replication, from virus entry and uncoating to assembly and budding of the virus particle. M1 binding to ribonucleocapsids (RNPs) in nucleus seems to inhibit viral transcription. Interaction of viral NEP with M1-RNP is thought to promote nuclear export of the complex, which is targeted to the virion assembly site at the apical plasma membrane in polarized epithelial cells. Interactions with NA and HA may bring M1, a non-raft-associated protein, into lipid rafts. Forms a continuous shell on the inner side of the lipid bilayer in virion, where it binds the RNP. During virus entry into cell, the M2 ion channel acidifies the internal virion core, inducing M1 dissociation from the RNP. M1-free RNPs are transported to the nucleus, where viral transcription and replication can take place.</text>
</comment>
<comment type="function">
    <text evidence="1">Determines the virion's shape: spherical or filamentous. Clinical isolates of influenza are characterized by the presence of significant proportion of filamentous virions, whereas after multiple passage on eggs or cell culture, virions have only spherical morphology. Filamentous virions are thought to be important to infect neighboring cells, and spherical virions more suited to spread through aerosol between hosts organisms.</text>
</comment>
<comment type="subunit">
    <text evidence="1">Homodimer and homomultimer. Interacts with NEP. Binds ribonucleocapsid by both interacting with genomic RNA and NP protein. May interact with HA and NA. Cannot bind NP without genomic RNA.</text>
</comment>
<comment type="subcellular location">
    <subcellularLocation>
        <location evidence="1">Virion membrane</location>
        <topology evidence="1">Peripheral membrane protein</topology>
        <orientation evidence="1">Cytoplasmic side</orientation>
    </subcellularLocation>
    <subcellularLocation>
        <location evidence="1">Host nucleus</location>
    </subcellularLocation>
</comment>
<comment type="alternative products">
    <event type="alternative splicing"/>
    <isoform>
        <id>Q67204-1</id>
        <name>M1</name>
        <sequence type="displayed"/>
    </isoform>
    <isoform>
        <id>Q67203-1</id>
        <name>M2</name>
        <sequence type="external"/>
    </isoform>
    <text>Only the first 9 residues are shared by the 2 isoforms.</text>
</comment>
<comment type="miscellaneous">
    <text evidence="1">Most abundant protein in virion. When expressed alone can form virus-like particles in transfected cells.</text>
</comment>
<comment type="similarity">
    <text evidence="1">Belongs to the influenza viruses Matrix protein M1 family.</text>
</comment>
<name>M1_I81A4</name>
<reference key="1">
    <citation type="journal article" date="1991" name="J. Virol.">
        <title>Evolutionary analysis of the influenza A virus M gene with comparison of the M1 and M2 proteins.</title>
        <authorList>
            <person name="Ito T."/>
            <person name="Gorman O.T."/>
            <person name="Kawaoka Y."/>
            <person name="Bean W.J."/>
            <person name="Webster R.G."/>
        </authorList>
    </citation>
    <scope>NUCLEOTIDE SEQUENCE [GENOMIC RNA]</scope>
</reference>
<organism>
    <name type="scientific">Influenza A virus (strain A/Swine/Ontario/2/1981 H1N1)</name>
    <dbReference type="NCBI Taxonomy" id="384501"/>
    <lineage>
        <taxon>Viruses</taxon>
        <taxon>Riboviria</taxon>
        <taxon>Orthornavirae</taxon>
        <taxon>Negarnaviricota</taxon>
        <taxon>Polyploviricotina</taxon>
        <taxon>Insthoviricetes</taxon>
        <taxon>Articulavirales</taxon>
        <taxon>Orthomyxoviridae</taxon>
        <taxon>Alphainfluenzavirus</taxon>
        <taxon>Alphainfluenzavirus influenzae</taxon>
        <taxon>Influenza A virus</taxon>
    </lineage>
</organism>
<sequence length="252" mass="27882">MSLLTEVETYVLSIVPSGPLKAEIAQRLEDVFAGKNTDLEALMEWLKTRPILSPLTKGILGFVFTLTVPSERGLQRRRFVQNALNGNGDPNNMDKAVKLYRKLKREITFHGAKEVALSYSTGALASCMGLIYNRMGTVTTEVAFGLVCATCEQIADSQHRSHRQMVTTTNPLIRHENRMVLASTTAKAMEQMAGSSEQAAEAMEVASQARQMVQAMRTIGTHPSSSAGLKDDLLENLQAYQKRMGVQMQRFK</sequence>
<keyword id="KW-0025">Alternative splicing</keyword>
<keyword id="KW-1048">Host nucleus</keyword>
<keyword id="KW-0472">Membrane</keyword>
<keyword id="KW-0694">RNA-binding</keyword>
<keyword id="KW-0468">Viral matrix protein</keyword>
<keyword id="KW-0946">Virion</keyword>
<feature type="chain" id="PRO_0000326317" description="Matrix protein 1">
    <location>
        <begin position="1"/>
        <end position="252"/>
    </location>
</feature>
<feature type="region of interest" description="Membrane-binding" evidence="1">
    <location>
        <begin position="1"/>
        <end position="164"/>
    </location>
</feature>
<feature type="region of interest" description="RNP-binding" evidence="1">
    <location>
        <begin position="165"/>
        <end position="252"/>
    </location>
</feature>
<feature type="short sequence motif" description="Nuclear localization signal" evidence="1">
    <location>
        <begin position="101"/>
        <end position="105"/>
    </location>
</feature>